<dbReference type="EMBL" id="CP000255">
    <property type="protein sequence ID" value="ABD21991.1"/>
    <property type="molecule type" value="Genomic_DNA"/>
</dbReference>
<dbReference type="RefSeq" id="WP_000759232.1">
    <property type="nucleotide sequence ID" value="NZ_CP027476.1"/>
</dbReference>
<dbReference type="SMR" id="Q2FH48"/>
<dbReference type="KEGG" id="saa:SAUSA300_1283"/>
<dbReference type="HOGENOM" id="CLU_026228_1_1_9"/>
<dbReference type="OMA" id="GTKHGTR"/>
<dbReference type="Proteomes" id="UP000001939">
    <property type="component" value="Chromosome"/>
</dbReference>
<dbReference type="GO" id="GO:0005886">
    <property type="term" value="C:plasma membrane"/>
    <property type="evidence" value="ECO:0007669"/>
    <property type="project" value="UniProtKB-SubCell"/>
</dbReference>
<dbReference type="GO" id="GO:0042301">
    <property type="term" value="F:phosphate ion binding"/>
    <property type="evidence" value="ECO:0007669"/>
    <property type="project" value="InterPro"/>
</dbReference>
<dbReference type="GO" id="GO:0006817">
    <property type="term" value="P:phosphate ion transport"/>
    <property type="evidence" value="ECO:0007669"/>
    <property type="project" value="UniProtKB-KW"/>
</dbReference>
<dbReference type="CDD" id="cd13654">
    <property type="entry name" value="PBP2_phosphate_like_2"/>
    <property type="match status" value="1"/>
</dbReference>
<dbReference type="Gene3D" id="3.40.190.10">
    <property type="entry name" value="Periplasmic binding protein-like II"/>
    <property type="match status" value="2"/>
</dbReference>
<dbReference type="InterPro" id="IPR024370">
    <property type="entry name" value="PBP_domain"/>
</dbReference>
<dbReference type="InterPro" id="IPR011862">
    <property type="entry name" value="Phos-bd"/>
</dbReference>
<dbReference type="InterPro" id="IPR050811">
    <property type="entry name" value="Phosphate_ABC_transporter"/>
</dbReference>
<dbReference type="NCBIfam" id="TIGR02136">
    <property type="entry name" value="ptsS_2"/>
    <property type="match status" value="1"/>
</dbReference>
<dbReference type="PANTHER" id="PTHR30570">
    <property type="entry name" value="PERIPLASMIC PHOSPHATE BINDING COMPONENT OF PHOSPHATE ABC TRANSPORTER"/>
    <property type="match status" value="1"/>
</dbReference>
<dbReference type="PANTHER" id="PTHR30570:SF1">
    <property type="entry name" value="PHOSPHATE-BINDING PROTEIN PSTS"/>
    <property type="match status" value="1"/>
</dbReference>
<dbReference type="Pfam" id="PF12849">
    <property type="entry name" value="PBP_like_2"/>
    <property type="match status" value="1"/>
</dbReference>
<dbReference type="SUPFAM" id="SSF53850">
    <property type="entry name" value="Periplasmic binding protein-like II"/>
    <property type="match status" value="1"/>
</dbReference>
<dbReference type="PROSITE" id="PS51257">
    <property type="entry name" value="PROKAR_LIPOPROTEIN"/>
    <property type="match status" value="1"/>
</dbReference>
<reference key="1">
    <citation type="journal article" date="2006" name="Lancet">
        <title>Complete genome sequence of USA300, an epidemic clone of community-acquired meticillin-resistant Staphylococcus aureus.</title>
        <authorList>
            <person name="Diep B.A."/>
            <person name="Gill S.R."/>
            <person name="Chang R.F."/>
            <person name="Phan T.H."/>
            <person name="Chen J.H."/>
            <person name="Davidson M.G."/>
            <person name="Lin F."/>
            <person name="Lin J."/>
            <person name="Carleton H.A."/>
            <person name="Mongodin E.F."/>
            <person name="Sensabaugh G.F."/>
            <person name="Perdreau-Remington F."/>
        </authorList>
    </citation>
    <scope>NUCLEOTIDE SEQUENCE [LARGE SCALE GENOMIC DNA]</scope>
    <source>
        <strain>USA300</strain>
    </source>
</reference>
<feature type="signal peptide" evidence="2">
    <location>
        <begin position="1"/>
        <end position="20"/>
    </location>
</feature>
<feature type="chain" id="PRO_0000281653" description="Phosphate-binding protein PstS">
    <location>
        <begin position="21"/>
        <end position="327"/>
    </location>
</feature>
<feature type="region of interest" description="Disordered" evidence="3">
    <location>
        <begin position="307"/>
        <end position="327"/>
    </location>
</feature>
<feature type="lipid moiety-binding region" description="N-palmitoyl cysteine" evidence="2">
    <location>
        <position position="21"/>
    </location>
</feature>
<feature type="lipid moiety-binding region" description="S-diacylglycerol cysteine" evidence="2">
    <location>
        <position position="21"/>
    </location>
</feature>
<keyword id="KW-1003">Cell membrane</keyword>
<keyword id="KW-0449">Lipoprotein</keyword>
<keyword id="KW-0472">Membrane</keyword>
<keyword id="KW-0564">Palmitate</keyword>
<keyword id="KW-0592">Phosphate transport</keyword>
<keyword id="KW-0732">Signal</keyword>
<keyword id="KW-0813">Transport</keyword>
<protein>
    <recommendedName>
        <fullName>Phosphate-binding protein PstS</fullName>
        <shortName>PBP</shortName>
    </recommendedName>
</protein>
<name>PSTS_STAA3</name>
<proteinExistence type="inferred from homology"/>
<organism>
    <name type="scientific">Staphylococcus aureus (strain USA300)</name>
    <dbReference type="NCBI Taxonomy" id="367830"/>
    <lineage>
        <taxon>Bacteria</taxon>
        <taxon>Bacillati</taxon>
        <taxon>Bacillota</taxon>
        <taxon>Bacilli</taxon>
        <taxon>Bacillales</taxon>
        <taxon>Staphylococcaceae</taxon>
        <taxon>Staphylococcus</taxon>
    </lineage>
</organism>
<accession>Q2FH48</accession>
<gene>
    <name type="primary">pstS</name>
    <name type="ordered locus">SAUSA300_1283</name>
</gene>
<sequence length="327" mass="36117">MKKWQFVGTTALGATLLLGACGGGNGGSGNSDLKGEAKGDGSSTVAPIVEKLNEKWAQDHSDAKISAGQAGTGAGFQKFIAGDIDFADASRPIKDEEKQKLQDKNIKYKEFKIAQDGVTVAVNKENDFVDELDKQQLKAIYSGKAKTWKDVNSKWPDKKINAVSPNSSHGTYDFFENEVMNKEDIKAEKNADTNAIVSSVTKNKEGIGYFGYNFYVQNKDKLKEVKIKDENGKATEPTKKTIQDNSYALSRPLFIYVNEKALKDNKVMSEFIKFVLEDKGKAAEEAGYVAAPEKTYKSQLDDLKAFIDKNQKSDDKKSDDKKSEDKK</sequence>
<evidence type="ECO:0000250" key="1"/>
<evidence type="ECO:0000255" key="2">
    <source>
        <dbReference type="PROSITE-ProRule" id="PRU00303"/>
    </source>
</evidence>
<evidence type="ECO:0000256" key="3">
    <source>
        <dbReference type="SAM" id="MobiDB-lite"/>
    </source>
</evidence>
<evidence type="ECO:0000305" key="4"/>
<comment type="function">
    <text evidence="1">Part of the ABC transporter complex PstSACB involved in phosphate import.</text>
</comment>
<comment type="subunit">
    <text evidence="4">The complex is composed of two ATP-binding proteins (PstB), two transmembrane proteins (PstC and PstA) and a solute-binding protein (PstS).</text>
</comment>
<comment type="subcellular location">
    <subcellularLocation>
        <location evidence="4">Cell membrane</location>
        <topology evidence="4">Lipid-anchor</topology>
    </subcellularLocation>
</comment>
<comment type="similarity">
    <text evidence="4">Belongs to the PstS family.</text>
</comment>